<keyword id="KW-0963">Cytoplasm</keyword>
<keyword id="KW-0396">Initiation factor</keyword>
<keyword id="KW-0648">Protein biosynthesis</keyword>
<keyword id="KW-0694">RNA-binding</keyword>
<keyword id="KW-0699">rRNA-binding</keyword>
<proteinExistence type="inferred from homology"/>
<comment type="function">
    <text evidence="1">One of the essential components for the initiation of protein synthesis. Stabilizes the binding of IF-2 and IF-3 on the 30S subunit to which N-formylmethionyl-tRNA(fMet) subsequently binds. Helps modulate mRNA selection, yielding the 30S pre-initiation complex (PIC). Upon addition of the 50S ribosomal subunit IF-1, IF-2 and IF-3 are released leaving the mature 70S translation initiation complex.</text>
</comment>
<comment type="subunit">
    <text evidence="1">Component of the 30S ribosomal translation pre-initiation complex which assembles on the 30S ribosome in the order IF-2 and IF-3, IF-1 and N-formylmethionyl-tRNA(fMet); mRNA recruitment can occur at any time during PIC assembly.</text>
</comment>
<comment type="subcellular location">
    <subcellularLocation>
        <location evidence="1">Cytoplasm</location>
    </subcellularLocation>
</comment>
<comment type="similarity">
    <text evidence="1">Belongs to the IF-1 family.</text>
</comment>
<sequence length="72" mass="8376">MSKDDSIEFEGSVSETLPNTTFRVKLENGHEIIAHISGRMRKNYIRILTGDRVKVEMTPYDLTKGRITYRMK</sequence>
<gene>
    <name evidence="1" type="primary">infA</name>
    <name type="ordered locus">XOO2411</name>
</gene>
<organism>
    <name type="scientific">Xanthomonas oryzae pv. oryzae (strain MAFF 311018)</name>
    <dbReference type="NCBI Taxonomy" id="342109"/>
    <lineage>
        <taxon>Bacteria</taxon>
        <taxon>Pseudomonadati</taxon>
        <taxon>Pseudomonadota</taxon>
        <taxon>Gammaproteobacteria</taxon>
        <taxon>Lysobacterales</taxon>
        <taxon>Lysobacteraceae</taxon>
        <taxon>Xanthomonas</taxon>
    </lineage>
</organism>
<name>IF1_XANOM</name>
<dbReference type="EMBL" id="AP008229">
    <property type="protein sequence ID" value="BAE69166.1"/>
    <property type="molecule type" value="Genomic_DNA"/>
</dbReference>
<dbReference type="RefSeq" id="WP_002813418.1">
    <property type="nucleotide sequence ID" value="NC_007705.1"/>
</dbReference>
<dbReference type="SMR" id="Q2P2R1"/>
<dbReference type="GeneID" id="97510368"/>
<dbReference type="KEGG" id="xom:XOO2411"/>
<dbReference type="HOGENOM" id="CLU_151267_1_0_6"/>
<dbReference type="GO" id="GO:0005829">
    <property type="term" value="C:cytosol"/>
    <property type="evidence" value="ECO:0007669"/>
    <property type="project" value="TreeGrafter"/>
</dbReference>
<dbReference type="GO" id="GO:0043022">
    <property type="term" value="F:ribosome binding"/>
    <property type="evidence" value="ECO:0007669"/>
    <property type="project" value="UniProtKB-UniRule"/>
</dbReference>
<dbReference type="GO" id="GO:0019843">
    <property type="term" value="F:rRNA binding"/>
    <property type="evidence" value="ECO:0007669"/>
    <property type="project" value="UniProtKB-UniRule"/>
</dbReference>
<dbReference type="GO" id="GO:0003743">
    <property type="term" value="F:translation initiation factor activity"/>
    <property type="evidence" value="ECO:0007669"/>
    <property type="project" value="UniProtKB-UniRule"/>
</dbReference>
<dbReference type="CDD" id="cd04451">
    <property type="entry name" value="S1_IF1"/>
    <property type="match status" value="1"/>
</dbReference>
<dbReference type="FunFam" id="2.40.50.140:FF:000002">
    <property type="entry name" value="Translation initiation factor IF-1"/>
    <property type="match status" value="1"/>
</dbReference>
<dbReference type="Gene3D" id="2.40.50.140">
    <property type="entry name" value="Nucleic acid-binding proteins"/>
    <property type="match status" value="1"/>
</dbReference>
<dbReference type="HAMAP" id="MF_00075">
    <property type="entry name" value="IF_1"/>
    <property type="match status" value="1"/>
</dbReference>
<dbReference type="InterPro" id="IPR012340">
    <property type="entry name" value="NA-bd_OB-fold"/>
</dbReference>
<dbReference type="InterPro" id="IPR006196">
    <property type="entry name" value="RNA-binding_domain_S1_IF1"/>
</dbReference>
<dbReference type="InterPro" id="IPR003029">
    <property type="entry name" value="S1_domain"/>
</dbReference>
<dbReference type="InterPro" id="IPR004368">
    <property type="entry name" value="TIF_IF1"/>
</dbReference>
<dbReference type="NCBIfam" id="TIGR00008">
    <property type="entry name" value="infA"/>
    <property type="match status" value="1"/>
</dbReference>
<dbReference type="PANTHER" id="PTHR33370">
    <property type="entry name" value="TRANSLATION INITIATION FACTOR IF-1, CHLOROPLASTIC"/>
    <property type="match status" value="1"/>
</dbReference>
<dbReference type="PANTHER" id="PTHR33370:SF1">
    <property type="entry name" value="TRANSLATION INITIATION FACTOR IF-1, CHLOROPLASTIC"/>
    <property type="match status" value="1"/>
</dbReference>
<dbReference type="Pfam" id="PF01176">
    <property type="entry name" value="eIF-1a"/>
    <property type="match status" value="1"/>
</dbReference>
<dbReference type="SMART" id="SM00316">
    <property type="entry name" value="S1"/>
    <property type="match status" value="1"/>
</dbReference>
<dbReference type="SUPFAM" id="SSF50249">
    <property type="entry name" value="Nucleic acid-binding proteins"/>
    <property type="match status" value="1"/>
</dbReference>
<dbReference type="PROSITE" id="PS50832">
    <property type="entry name" value="S1_IF1_TYPE"/>
    <property type="match status" value="1"/>
</dbReference>
<accession>Q2P2R1</accession>
<feature type="chain" id="PRO_0000263899" description="Translation initiation factor IF-1">
    <location>
        <begin position="1"/>
        <end position="72"/>
    </location>
</feature>
<feature type="domain" description="S1-like" evidence="1">
    <location>
        <begin position="1"/>
        <end position="72"/>
    </location>
</feature>
<evidence type="ECO:0000255" key="1">
    <source>
        <dbReference type="HAMAP-Rule" id="MF_00075"/>
    </source>
</evidence>
<protein>
    <recommendedName>
        <fullName evidence="1">Translation initiation factor IF-1</fullName>
    </recommendedName>
</protein>
<reference key="1">
    <citation type="journal article" date="2005" name="Jpn. Agric. Res. Q.">
        <title>Genome sequence of Xanthomonas oryzae pv. oryzae suggests contribution of large numbers of effector genes and insertion sequences to its race diversity.</title>
        <authorList>
            <person name="Ochiai H."/>
            <person name="Inoue Y."/>
            <person name="Takeya M."/>
            <person name="Sasaki A."/>
            <person name="Kaku H."/>
        </authorList>
    </citation>
    <scope>NUCLEOTIDE SEQUENCE [LARGE SCALE GENOMIC DNA]</scope>
    <source>
        <strain>MAFF 311018</strain>
    </source>
</reference>